<comment type="subcellular location">
    <subcellularLocation>
        <location>Nucleus</location>
    </subcellularLocation>
</comment>
<comment type="similarity">
    <text evidence="3">Belongs to the engrailed homeobox family.</text>
</comment>
<proteinExistence type="inferred from homology"/>
<name>HME60_APIME</name>
<feature type="chain" id="PRO_0000196082" description="Homeobox protein E60">
    <location>
        <begin position="1" status="less than"/>
        <end position="109" status="greater than"/>
    </location>
</feature>
<feature type="DNA-binding region" description="Homeobox" evidence="1">
    <location>
        <begin position="20"/>
        <end position="79"/>
    </location>
</feature>
<feature type="region of interest" description="Disordered" evidence="2">
    <location>
        <begin position="1"/>
        <end position="31"/>
    </location>
</feature>
<feature type="non-terminal residue">
    <location>
        <position position="1"/>
    </location>
</feature>
<feature type="non-terminal residue">
    <location>
        <position position="109"/>
    </location>
</feature>
<keyword id="KW-0217">Developmental protein</keyword>
<keyword id="KW-0238">DNA-binding</keyword>
<keyword id="KW-0371">Homeobox</keyword>
<keyword id="KW-0539">Nucleus</keyword>
<keyword id="KW-1185">Reference proteome</keyword>
<reference key="1">
    <citation type="journal article" date="1989" name="Proc. Natl. Acad. Sci. U.S.A.">
        <title>Comparison of homeobox-containing genes of the honeybee and Drosophila.</title>
        <authorList>
            <person name="Walldorf U."/>
            <person name="Fleig R."/>
            <person name="Gehring W.J."/>
        </authorList>
    </citation>
    <scope>NUCLEOTIDE SEQUENCE [GENOMIC DNA]</scope>
</reference>
<evidence type="ECO:0000255" key="1">
    <source>
        <dbReference type="PROSITE-ProRule" id="PRU00108"/>
    </source>
</evidence>
<evidence type="ECO:0000256" key="2">
    <source>
        <dbReference type="SAM" id="MobiDB-lite"/>
    </source>
</evidence>
<evidence type="ECO:0000305" key="3"/>
<organism>
    <name type="scientific">Apis mellifera</name>
    <name type="common">Honeybee</name>
    <dbReference type="NCBI Taxonomy" id="7460"/>
    <lineage>
        <taxon>Eukaryota</taxon>
        <taxon>Metazoa</taxon>
        <taxon>Ecdysozoa</taxon>
        <taxon>Arthropoda</taxon>
        <taxon>Hexapoda</taxon>
        <taxon>Insecta</taxon>
        <taxon>Pterygota</taxon>
        <taxon>Neoptera</taxon>
        <taxon>Endopterygota</taxon>
        <taxon>Hymenoptera</taxon>
        <taxon>Apocrita</taxon>
        <taxon>Aculeata</taxon>
        <taxon>Apoidea</taxon>
        <taxon>Anthophila</taxon>
        <taxon>Apidae</taxon>
        <taxon>Apis</taxon>
    </lineage>
</organism>
<dbReference type="EMBL" id="M29489">
    <property type="protein sequence ID" value="AAA27724.1"/>
    <property type="molecule type" value="Genomic_DNA"/>
</dbReference>
<dbReference type="PIR" id="F34510">
    <property type="entry name" value="F34510"/>
</dbReference>
<dbReference type="SMR" id="P09075"/>
<dbReference type="PaxDb" id="7460-GB55332-PA"/>
<dbReference type="EnsemblMetazoa" id="XM_006571083">
    <property type="protein sequence ID" value="XP_006571146"/>
    <property type="gene ID" value="LOC100577365"/>
</dbReference>
<dbReference type="eggNOG" id="KOG0493">
    <property type="taxonomic scope" value="Eukaryota"/>
</dbReference>
<dbReference type="InParanoid" id="P09075"/>
<dbReference type="Proteomes" id="UP000005203">
    <property type="component" value="Unplaced"/>
</dbReference>
<dbReference type="GO" id="GO:0005634">
    <property type="term" value="C:nucleus"/>
    <property type="evidence" value="ECO:0007669"/>
    <property type="project" value="UniProtKB-SubCell"/>
</dbReference>
<dbReference type="GO" id="GO:0000981">
    <property type="term" value="F:DNA-binding transcription factor activity, RNA polymerase II-specific"/>
    <property type="evidence" value="ECO:0007669"/>
    <property type="project" value="InterPro"/>
</dbReference>
<dbReference type="GO" id="GO:0000978">
    <property type="term" value="F:RNA polymerase II cis-regulatory region sequence-specific DNA binding"/>
    <property type="evidence" value="ECO:0007669"/>
    <property type="project" value="TreeGrafter"/>
</dbReference>
<dbReference type="GO" id="GO:0030182">
    <property type="term" value="P:neuron differentiation"/>
    <property type="evidence" value="ECO:0007669"/>
    <property type="project" value="TreeGrafter"/>
</dbReference>
<dbReference type="CDD" id="cd00086">
    <property type="entry name" value="homeodomain"/>
    <property type="match status" value="1"/>
</dbReference>
<dbReference type="FunFam" id="1.10.10.60:FF:000345">
    <property type="entry name" value="Homeobox protein engrailed-like"/>
    <property type="match status" value="1"/>
</dbReference>
<dbReference type="Gene3D" id="1.10.10.60">
    <property type="entry name" value="Homeodomain-like"/>
    <property type="match status" value="1"/>
</dbReference>
<dbReference type="InterPro" id="IPR050720">
    <property type="entry name" value="Engrailed_Homeobox_TFs"/>
</dbReference>
<dbReference type="InterPro" id="IPR001356">
    <property type="entry name" value="HD"/>
</dbReference>
<dbReference type="InterPro" id="IPR000747">
    <property type="entry name" value="HD_engrailed"/>
</dbReference>
<dbReference type="InterPro" id="IPR020479">
    <property type="entry name" value="HD_metazoa"/>
</dbReference>
<dbReference type="InterPro" id="IPR019549">
    <property type="entry name" value="Homeobox-engrailed_C-terminal"/>
</dbReference>
<dbReference type="InterPro" id="IPR019737">
    <property type="entry name" value="Homeobox-engrailed_CS"/>
</dbReference>
<dbReference type="InterPro" id="IPR017970">
    <property type="entry name" value="Homeobox_CS"/>
</dbReference>
<dbReference type="InterPro" id="IPR009057">
    <property type="entry name" value="Homeodomain-like_sf"/>
</dbReference>
<dbReference type="InterPro" id="IPR000047">
    <property type="entry name" value="HTH_motif"/>
</dbReference>
<dbReference type="PANTHER" id="PTHR24341">
    <property type="entry name" value="HOMEOBOX PROTEIN ENGRAILED"/>
    <property type="match status" value="1"/>
</dbReference>
<dbReference type="PANTHER" id="PTHR24341:SF6">
    <property type="entry name" value="HOMEOBOX PROTEIN INVECTED"/>
    <property type="match status" value="1"/>
</dbReference>
<dbReference type="Pfam" id="PF10525">
    <property type="entry name" value="Engrail_1_C_sig"/>
    <property type="match status" value="1"/>
</dbReference>
<dbReference type="Pfam" id="PF00046">
    <property type="entry name" value="Homeodomain"/>
    <property type="match status" value="1"/>
</dbReference>
<dbReference type="PRINTS" id="PR00026">
    <property type="entry name" value="ENGRAILED"/>
</dbReference>
<dbReference type="PRINTS" id="PR00024">
    <property type="entry name" value="HOMEOBOX"/>
</dbReference>
<dbReference type="PRINTS" id="PR00031">
    <property type="entry name" value="HTHREPRESSR"/>
</dbReference>
<dbReference type="SMART" id="SM00389">
    <property type="entry name" value="HOX"/>
    <property type="match status" value="1"/>
</dbReference>
<dbReference type="SUPFAM" id="SSF46689">
    <property type="entry name" value="Homeodomain-like"/>
    <property type="match status" value="1"/>
</dbReference>
<dbReference type="PROSITE" id="PS00033">
    <property type="entry name" value="ENGRAILED"/>
    <property type="match status" value="1"/>
</dbReference>
<dbReference type="PROSITE" id="PS00027">
    <property type="entry name" value="HOMEOBOX_1"/>
    <property type="match status" value="1"/>
</dbReference>
<dbReference type="PROSITE" id="PS50071">
    <property type="entry name" value="HOMEOBOX_2"/>
    <property type="match status" value="1"/>
</dbReference>
<sequence>PRTRRVKRSDGRGNGGTPEEKRPRTAFSGEQLARLKREFAENRYLTERRRQQLSRDLGLNEAQIKIWFQNKRAKIKKASGQKNPLALQLMAQGLYNHSTVPLTKEEEEQ</sequence>
<protein>
    <recommendedName>
        <fullName>Homeobox protein E60</fullName>
    </recommendedName>
</protein>
<accession>P09075</accession>